<accession>Q9K4Z4</accession>
<name>OTC_MORPR</name>
<comment type="function">
    <text evidence="1">Reversibly catalyzes the transfer of the carbamoyl group from carbamoyl phosphate (CP) to the N(epsilon) atom of ornithine (ORN) to produce L-citrulline.</text>
</comment>
<comment type="catalytic activity">
    <reaction>
        <text>carbamoyl phosphate + L-ornithine = L-citrulline + phosphate + H(+)</text>
        <dbReference type="Rhea" id="RHEA:19513"/>
        <dbReference type="ChEBI" id="CHEBI:15378"/>
        <dbReference type="ChEBI" id="CHEBI:43474"/>
        <dbReference type="ChEBI" id="CHEBI:46911"/>
        <dbReference type="ChEBI" id="CHEBI:57743"/>
        <dbReference type="ChEBI" id="CHEBI:58228"/>
        <dbReference type="EC" id="2.1.3.3"/>
    </reaction>
</comment>
<comment type="pathway">
    <text>Amino-acid biosynthesis; L-arginine biosynthesis; L-arginine from L-ornithine and carbamoyl phosphate: step 1/3.</text>
</comment>
<comment type="subunit">
    <text evidence="1">Homododecamer.</text>
</comment>
<comment type="subcellular location">
    <subcellularLocation>
        <location evidence="1">Cytoplasm</location>
    </subcellularLocation>
</comment>
<comment type="similarity">
    <text evidence="3">Belongs to the aspartate/ornithine carbamoyltransferase superfamily. OTCase family.</text>
</comment>
<comment type="caution">
    <text evidence="3">Lacks the conserved threonine and leucine residues in positions 50 and 261, respectively, which are part of the carbamoylphosphate and ornithine binding sites; they are replaced by a leucine and a glutamine residue, respectively.</text>
</comment>
<organism>
    <name type="scientific">Moritella profunda</name>
    <dbReference type="NCBI Taxonomy" id="111291"/>
    <lineage>
        <taxon>Bacteria</taxon>
        <taxon>Pseudomonadati</taxon>
        <taxon>Pseudomonadota</taxon>
        <taxon>Gammaproteobacteria</taxon>
        <taxon>Alteromonadales</taxon>
        <taxon>Moritellaceae</taxon>
        <taxon>Moritella</taxon>
    </lineage>
</organism>
<keyword id="KW-0028">Amino-acid biosynthesis</keyword>
<keyword id="KW-0055">Arginine biosynthesis</keyword>
<keyword id="KW-0963">Cytoplasm</keyword>
<keyword id="KW-0808">Transferase</keyword>
<reference key="1">
    <citation type="journal article" date="2000" name="J. Bacteriol.">
        <title>Evolution of arginine biosynthesis in the bacterial domain: novel gene-enzyme relationships from psychrophilic Moritella strains (Vibrionaceae) and evolutionary significance of N-alpha-acetyl ornithinase.</title>
        <authorList>
            <person name="Xu Y."/>
            <person name="Liang Z."/>
            <person name="Legrain C."/>
            <person name="Ruger H.J."/>
            <person name="Glansdorff N."/>
        </authorList>
    </citation>
    <scope>NUCLEOTIDE SEQUENCE [GENOMIC DNA]</scope>
    <source>
        <strain>2674</strain>
    </source>
</reference>
<dbReference type="EC" id="2.1.3.3"/>
<dbReference type="EMBL" id="AJ252020">
    <property type="protein sequence ID" value="CAB95016.1"/>
    <property type="molecule type" value="Genomic_DNA"/>
</dbReference>
<dbReference type="SMR" id="Q9K4Z4"/>
<dbReference type="UniPathway" id="UPA00068">
    <property type="reaction ID" value="UER00112"/>
</dbReference>
<dbReference type="GO" id="GO:0005737">
    <property type="term" value="C:cytoplasm"/>
    <property type="evidence" value="ECO:0007669"/>
    <property type="project" value="UniProtKB-SubCell"/>
</dbReference>
<dbReference type="GO" id="GO:0016597">
    <property type="term" value="F:amino acid binding"/>
    <property type="evidence" value="ECO:0007669"/>
    <property type="project" value="InterPro"/>
</dbReference>
<dbReference type="GO" id="GO:0004585">
    <property type="term" value="F:ornithine carbamoyltransferase activity"/>
    <property type="evidence" value="ECO:0007669"/>
    <property type="project" value="UniProtKB-UniRule"/>
</dbReference>
<dbReference type="GO" id="GO:0042450">
    <property type="term" value="P:arginine biosynthetic process via ornithine"/>
    <property type="evidence" value="ECO:0007669"/>
    <property type="project" value="TreeGrafter"/>
</dbReference>
<dbReference type="GO" id="GO:0019240">
    <property type="term" value="P:citrulline biosynthetic process"/>
    <property type="evidence" value="ECO:0007669"/>
    <property type="project" value="TreeGrafter"/>
</dbReference>
<dbReference type="GO" id="GO:0006526">
    <property type="term" value="P:L-arginine biosynthetic process"/>
    <property type="evidence" value="ECO:0007669"/>
    <property type="project" value="UniProtKB-UniPathway"/>
</dbReference>
<dbReference type="FunFam" id="3.40.50.1370:FF:000008">
    <property type="entry name" value="Ornithine carbamoyltransferase"/>
    <property type="match status" value="1"/>
</dbReference>
<dbReference type="Gene3D" id="3.40.50.1370">
    <property type="entry name" value="Aspartate/ornithine carbamoyltransferase"/>
    <property type="match status" value="2"/>
</dbReference>
<dbReference type="HAMAP" id="MF_01109">
    <property type="entry name" value="OTCase"/>
    <property type="match status" value="1"/>
</dbReference>
<dbReference type="InterPro" id="IPR006132">
    <property type="entry name" value="Asp/Orn_carbamoyltranf_P-bd"/>
</dbReference>
<dbReference type="InterPro" id="IPR006130">
    <property type="entry name" value="Asp/Orn_carbamoylTrfase"/>
</dbReference>
<dbReference type="InterPro" id="IPR036901">
    <property type="entry name" value="Asp/Orn_carbamoylTrfase_sf"/>
</dbReference>
<dbReference type="InterPro" id="IPR006131">
    <property type="entry name" value="Asp_carbamoyltransf_Asp/Orn-bd"/>
</dbReference>
<dbReference type="InterPro" id="IPR002292">
    <property type="entry name" value="Orn/put_carbamltrans"/>
</dbReference>
<dbReference type="InterPro" id="IPR024904">
    <property type="entry name" value="OTCase_ArgI"/>
</dbReference>
<dbReference type="NCBIfam" id="TIGR00658">
    <property type="entry name" value="orni_carb_tr"/>
    <property type="match status" value="1"/>
</dbReference>
<dbReference type="NCBIfam" id="NF001986">
    <property type="entry name" value="PRK00779.1"/>
    <property type="match status" value="1"/>
</dbReference>
<dbReference type="NCBIfam" id="NF011380">
    <property type="entry name" value="PRK14805.1"/>
    <property type="match status" value="1"/>
</dbReference>
<dbReference type="PANTHER" id="PTHR45753">
    <property type="entry name" value="ORNITHINE CARBAMOYLTRANSFERASE, MITOCHONDRIAL"/>
    <property type="match status" value="1"/>
</dbReference>
<dbReference type="PANTHER" id="PTHR45753:SF3">
    <property type="entry name" value="ORNITHINE TRANSCARBAMYLASE, MITOCHONDRIAL"/>
    <property type="match status" value="1"/>
</dbReference>
<dbReference type="Pfam" id="PF00185">
    <property type="entry name" value="OTCace"/>
    <property type="match status" value="1"/>
</dbReference>
<dbReference type="Pfam" id="PF02729">
    <property type="entry name" value="OTCace_N"/>
    <property type="match status" value="1"/>
</dbReference>
<dbReference type="PRINTS" id="PR00100">
    <property type="entry name" value="AOTCASE"/>
</dbReference>
<dbReference type="PRINTS" id="PR00102">
    <property type="entry name" value="OTCASE"/>
</dbReference>
<dbReference type="SUPFAM" id="SSF53671">
    <property type="entry name" value="Aspartate/ornithine carbamoyltransferase"/>
    <property type="match status" value="1"/>
</dbReference>
<proteinExistence type="inferred from homology"/>
<protein>
    <recommendedName>
        <fullName>Ornithine carbamoyltransferase</fullName>
        <shortName>OTCase</shortName>
        <ecNumber>2.1.3.3</ecNumber>
    </recommendedName>
</protein>
<sequence length="301" mass="32987">MENLLSVKDLSKQQILDLLALAKAVKANPAEYSQALAGKSIVTIYEKQSLRTRVTFDIGIHKLGGHAVYLDAQNGAIGERETVKDFAANISRWADAIVARVMSHKTLEGLVEHGSVPVVNSLCDLYHPCQALADFLTISEHYEDVSKVKLAYIGEGNNVTHSLMLTGAILGAEVTAVCPRGSSPDAQIVKQAMALAEISGGKINVTDNLDDIVDYDVIYGDTWVSMGDDTPLAQVKEKYMPYQINKELLIRTGIKHVLHCQPAHRELEITSEVMDGEHSLIFDQAENRMHAQNAVLLTLLK</sequence>
<feature type="chain" id="PRO_0000112949" description="Ornithine carbamoyltransferase">
    <location>
        <begin position="1"/>
        <end position="301"/>
    </location>
</feature>
<feature type="binding site" evidence="2">
    <location>
        <position position="100"/>
    </location>
    <ligand>
        <name>carbamoyl phosphate</name>
        <dbReference type="ChEBI" id="CHEBI:58228"/>
    </ligand>
</feature>
<feature type="binding site" evidence="2">
    <location>
        <begin position="127"/>
        <end position="130"/>
    </location>
    <ligand>
        <name>carbamoyl phosphate</name>
        <dbReference type="ChEBI" id="CHEBI:58228"/>
    </ligand>
</feature>
<feature type="binding site" evidence="2">
    <location>
        <position position="158"/>
    </location>
    <ligand>
        <name>L-ornithine</name>
        <dbReference type="ChEBI" id="CHEBI:46911"/>
    </ligand>
</feature>
<feature type="binding site" evidence="2">
    <location>
        <position position="221"/>
    </location>
    <ligand>
        <name>L-ornithine</name>
        <dbReference type="ChEBI" id="CHEBI:46911"/>
    </ligand>
</feature>
<feature type="binding site" evidence="2">
    <location>
        <begin position="225"/>
        <end position="226"/>
    </location>
    <ligand>
        <name>L-ornithine</name>
        <dbReference type="ChEBI" id="CHEBI:46911"/>
    </ligand>
</feature>
<feature type="binding site" evidence="3">
    <location>
        <position position="260"/>
    </location>
    <ligand>
        <name>carbamoyl phosphate</name>
        <dbReference type="ChEBI" id="CHEBI:58228"/>
    </ligand>
</feature>
<feature type="binding site" evidence="2">
    <location>
        <position position="288"/>
    </location>
    <ligand>
        <name>carbamoyl phosphate</name>
        <dbReference type="ChEBI" id="CHEBI:58228"/>
    </ligand>
</feature>
<gene>
    <name type="primary">argF</name>
</gene>
<evidence type="ECO:0000250" key="1"/>
<evidence type="ECO:0000255" key="2">
    <source>
        <dbReference type="HAMAP-Rule" id="MF_01109"/>
    </source>
</evidence>
<evidence type="ECO:0000305" key="3"/>